<name>PTGR2_RAT</name>
<keyword id="KW-0025">Alternative splicing</keyword>
<keyword id="KW-0963">Cytoplasm</keyword>
<keyword id="KW-0443">Lipid metabolism</keyword>
<keyword id="KW-0521">NADP</keyword>
<keyword id="KW-0560">Oxidoreductase</keyword>
<keyword id="KW-1185">Reference proteome</keyword>
<dbReference type="EC" id="1.3.1.48" evidence="4"/>
<dbReference type="EMBL" id="AABR03048578">
    <property type="status" value="NOT_ANNOTATED_CDS"/>
    <property type="molecule type" value="Genomic_DNA"/>
</dbReference>
<dbReference type="EMBL" id="AABR03050041">
    <property type="status" value="NOT_ANNOTATED_CDS"/>
    <property type="molecule type" value="Genomic_DNA"/>
</dbReference>
<dbReference type="EMBL" id="BC091173">
    <property type="protein sequence ID" value="AAH91173.1"/>
    <property type="molecule type" value="mRNA"/>
</dbReference>
<dbReference type="RefSeq" id="NP_001015009.1">
    <molecule id="Q5BK81-2"/>
    <property type="nucleotide sequence ID" value="NM_001015009.2"/>
</dbReference>
<dbReference type="RefSeq" id="NP_001386355.1">
    <molecule id="Q5BK81-1"/>
    <property type="nucleotide sequence ID" value="NM_001399426.1"/>
</dbReference>
<dbReference type="RefSeq" id="XP_006240388.1">
    <property type="nucleotide sequence ID" value="XM_006240326.1"/>
</dbReference>
<dbReference type="RefSeq" id="XP_006240389.1">
    <molecule id="Q5BK81-1"/>
    <property type="nucleotide sequence ID" value="XM_006240327.4"/>
</dbReference>
<dbReference type="RefSeq" id="XP_006240390.1">
    <property type="nucleotide sequence ID" value="XM_006240328.3"/>
</dbReference>
<dbReference type="RefSeq" id="XP_063117803.1">
    <molecule id="Q5BK81-1"/>
    <property type="nucleotide sequence ID" value="XM_063261733.1"/>
</dbReference>
<dbReference type="RefSeq" id="XP_063117804.1">
    <molecule id="Q5BK81-1"/>
    <property type="nucleotide sequence ID" value="XM_063261734.1"/>
</dbReference>
<dbReference type="RefSeq" id="XP_063117805.1">
    <molecule id="Q5BK81-2"/>
    <property type="nucleotide sequence ID" value="XM_063261735.1"/>
</dbReference>
<dbReference type="SMR" id="Q5BK81"/>
<dbReference type="FunCoup" id="Q5BK81">
    <property type="interactions" value="1534"/>
</dbReference>
<dbReference type="STRING" id="10116.ENSRNOP00000055851"/>
<dbReference type="PhosphoSitePlus" id="Q5BK81"/>
<dbReference type="SwissPalm" id="Q5BK81"/>
<dbReference type="jPOST" id="Q5BK81"/>
<dbReference type="PaxDb" id="10116-ENSRNOP00000055851"/>
<dbReference type="Ensembl" id="ENSRNOT00000058095.4">
    <molecule id="Q5BK81-2"/>
    <property type="protein sequence ID" value="ENSRNOP00000054903.2"/>
    <property type="gene ID" value="ENSRNOG00000038166.6"/>
</dbReference>
<dbReference type="GeneID" id="299194"/>
<dbReference type="KEGG" id="rno:299194"/>
<dbReference type="AGR" id="RGD:1310518"/>
<dbReference type="CTD" id="145482"/>
<dbReference type="RGD" id="1310518">
    <property type="gene designation" value="Ptgr2"/>
</dbReference>
<dbReference type="VEuPathDB" id="HostDB:ENSRNOG00000038166"/>
<dbReference type="eggNOG" id="KOG1196">
    <property type="taxonomic scope" value="Eukaryota"/>
</dbReference>
<dbReference type="GeneTree" id="ENSGT00940000156793"/>
<dbReference type="HOGENOM" id="CLU_026673_29_2_1"/>
<dbReference type="InParanoid" id="Q5BK81"/>
<dbReference type="TreeFam" id="TF324201"/>
<dbReference type="PRO" id="PR:Q5BK81"/>
<dbReference type="Proteomes" id="UP000002494">
    <property type="component" value="Chromosome 6"/>
</dbReference>
<dbReference type="Bgee" id="ENSRNOG00000038166">
    <property type="expression patterns" value="Expressed in heart and 18 other cell types or tissues"/>
</dbReference>
<dbReference type="GO" id="GO:0005737">
    <property type="term" value="C:cytoplasm"/>
    <property type="evidence" value="ECO:0007669"/>
    <property type="project" value="UniProtKB-SubCell"/>
</dbReference>
<dbReference type="GO" id="GO:0047522">
    <property type="term" value="F:15-oxoprostaglandin 13-oxidase [NAD(P)+] activity"/>
    <property type="evidence" value="ECO:0000250"/>
    <property type="project" value="UniProtKB"/>
</dbReference>
<dbReference type="GO" id="GO:0006693">
    <property type="term" value="P:prostaglandin metabolic process"/>
    <property type="evidence" value="ECO:0000250"/>
    <property type="project" value="UniProtKB"/>
</dbReference>
<dbReference type="CDD" id="cd08293">
    <property type="entry name" value="PTGR2"/>
    <property type="match status" value="1"/>
</dbReference>
<dbReference type="FunFam" id="3.40.50.720:FF:000121">
    <property type="entry name" value="Prostaglandin reductase 2"/>
    <property type="match status" value="1"/>
</dbReference>
<dbReference type="FunFam" id="3.90.180.10:FF:000019">
    <property type="entry name" value="Prostaglandin reductase 2"/>
    <property type="match status" value="1"/>
</dbReference>
<dbReference type="Gene3D" id="3.90.180.10">
    <property type="entry name" value="Medium-chain alcohol dehydrogenases, catalytic domain"/>
    <property type="match status" value="1"/>
</dbReference>
<dbReference type="Gene3D" id="3.40.50.720">
    <property type="entry name" value="NAD(P)-binding Rossmann-like Domain"/>
    <property type="match status" value="1"/>
</dbReference>
<dbReference type="InterPro" id="IPR013149">
    <property type="entry name" value="ADH-like_C"/>
</dbReference>
<dbReference type="InterPro" id="IPR041694">
    <property type="entry name" value="ADH_N_2"/>
</dbReference>
<dbReference type="InterPro" id="IPR011032">
    <property type="entry name" value="GroES-like_sf"/>
</dbReference>
<dbReference type="InterPro" id="IPR045010">
    <property type="entry name" value="MDR_fam"/>
</dbReference>
<dbReference type="InterPro" id="IPR036291">
    <property type="entry name" value="NAD(P)-bd_dom_sf"/>
</dbReference>
<dbReference type="InterPro" id="IPR037399">
    <property type="entry name" value="PTGR2"/>
</dbReference>
<dbReference type="PANTHER" id="PTHR43205">
    <property type="entry name" value="PROSTAGLANDIN REDUCTASE"/>
    <property type="match status" value="1"/>
</dbReference>
<dbReference type="PANTHER" id="PTHR43205:SF5">
    <property type="entry name" value="PROSTAGLANDIN REDUCTASE 2"/>
    <property type="match status" value="1"/>
</dbReference>
<dbReference type="Pfam" id="PF16884">
    <property type="entry name" value="ADH_N_2"/>
    <property type="match status" value="1"/>
</dbReference>
<dbReference type="Pfam" id="PF00107">
    <property type="entry name" value="ADH_zinc_N"/>
    <property type="match status" value="1"/>
</dbReference>
<dbReference type="SUPFAM" id="SSF50129">
    <property type="entry name" value="GroES-like"/>
    <property type="match status" value="1"/>
</dbReference>
<dbReference type="SUPFAM" id="SSF51735">
    <property type="entry name" value="NAD(P)-binding Rossmann-fold domains"/>
    <property type="match status" value="1"/>
</dbReference>
<organism>
    <name type="scientific">Rattus norvegicus</name>
    <name type="common">Rat</name>
    <dbReference type="NCBI Taxonomy" id="10116"/>
    <lineage>
        <taxon>Eukaryota</taxon>
        <taxon>Metazoa</taxon>
        <taxon>Chordata</taxon>
        <taxon>Craniata</taxon>
        <taxon>Vertebrata</taxon>
        <taxon>Euteleostomi</taxon>
        <taxon>Mammalia</taxon>
        <taxon>Eutheria</taxon>
        <taxon>Euarchontoglires</taxon>
        <taxon>Glires</taxon>
        <taxon>Rodentia</taxon>
        <taxon>Myomorpha</taxon>
        <taxon>Muroidea</taxon>
        <taxon>Muridae</taxon>
        <taxon>Murinae</taxon>
        <taxon>Rattus</taxon>
    </lineage>
</organism>
<gene>
    <name evidence="11" type="primary">Ptgr2</name>
    <name type="synonym">Zadh1</name>
</gene>
<protein>
    <recommendedName>
        <fullName evidence="4">Prostaglandin reductase 2</fullName>
        <shortName evidence="4">PRG-2</shortName>
        <ecNumber evidence="4">1.3.1.48</ecNumber>
    </recommendedName>
    <alternativeName>
        <fullName evidence="4">15-oxoprostaglandin 13-reductase</fullName>
    </alternativeName>
    <alternativeName>
        <fullName>Zinc-binding alcohol dehydrogenase domain-containing protein 1</fullName>
    </alternativeName>
</protein>
<comment type="function">
    <text evidence="4">Functions as 15-oxo-prostaglandin 13-reductase and acts on 15-keto-PGE1, 15-keto-PGE2, 15-keto-PGE1-alpha and 15-keto-PGE2-alpha with highest activity towards 15-keto-PGE2. Overexpression represses transcriptional activity of PPARG and inhibits adipocyte differentiation.</text>
</comment>
<comment type="catalytic activity">
    <reaction evidence="4">
        <text>13,14-dihydro-15-oxo-prostaglandin E2 + NAD(+) = 15-oxoprostaglandin E2 + NADH + H(+)</text>
        <dbReference type="Rhea" id="RHEA:11916"/>
        <dbReference type="ChEBI" id="CHEBI:15378"/>
        <dbReference type="ChEBI" id="CHEBI:57400"/>
        <dbReference type="ChEBI" id="CHEBI:57402"/>
        <dbReference type="ChEBI" id="CHEBI:57540"/>
        <dbReference type="ChEBI" id="CHEBI:57945"/>
        <dbReference type="EC" id="1.3.1.48"/>
    </reaction>
    <physiologicalReaction direction="right-to-left" evidence="4">
        <dbReference type="Rhea" id="RHEA:11918"/>
    </physiologicalReaction>
</comment>
<comment type="catalytic activity">
    <reaction evidence="4">
        <text>13,14-dihydro-15-oxo-prostaglandin E2 + NADP(+) = 15-oxoprostaglandin E2 + NADPH + H(+)</text>
        <dbReference type="Rhea" id="RHEA:11912"/>
        <dbReference type="ChEBI" id="CHEBI:15378"/>
        <dbReference type="ChEBI" id="CHEBI:57400"/>
        <dbReference type="ChEBI" id="CHEBI:57402"/>
        <dbReference type="ChEBI" id="CHEBI:57783"/>
        <dbReference type="ChEBI" id="CHEBI:58349"/>
        <dbReference type="EC" id="1.3.1.48"/>
    </reaction>
    <physiologicalReaction direction="right-to-left" evidence="4">
        <dbReference type="Rhea" id="RHEA:11914"/>
    </physiologicalReaction>
</comment>
<comment type="catalytic activity">
    <reaction evidence="4">
        <text>13,14-dihydro-15-oxo-PGF2alpha + NADP(+) = 15-oxoprostaglandin F2alpha + NADPH + H(+)</text>
        <dbReference type="Rhea" id="RHEA:50588"/>
        <dbReference type="ChEBI" id="CHEBI:15378"/>
        <dbReference type="ChEBI" id="CHEBI:57783"/>
        <dbReference type="ChEBI" id="CHEBI:58349"/>
        <dbReference type="ChEBI" id="CHEBI:133374"/>
        <dbReference type="ChEBI" id="CHEBI:133409"/>
    </reaction>
    <physiologicalReaction direction="right-to-left" evidence="4">
        <dbReference type="Rhea" id="RHEA:50590"/>
    </physiologicalReaction>
</comment>
<comment type="catalytic activity">
    <reaction evidence="4">
        <text>13,14-dihydro-15-oxo-prostaglandin E1 + NADP(+) = 15-oxoprostaglandin E1 + NADPH + H(+)</text>
        <dbReference type="Rhea" id="RHEA:50584"/>
        <dbReference type="ChEBI" id="CHEBI:15378"/>
        <dbReference type="ChEBI" id="CHEBI:57401"/>
        <dbReference type="ChEBI" id="CHEBI:57783"/>
        <dbReference type="ChEBI" id="CHEBI:58349"/>
        <dbReference type="ChEBI" id="CHEBI:133408"/>
    </reaction>
    <physiologicalReaction direction="right-to-left" evidence="4">
        <dbReference type="Rhea" id="RHEA:50586"/>
    </physiologicalReaction>
</comment>
<comment type="catalytic activity">
    <reaction evidence="4">
        <text>13,14-dihydro-15-oxo-prostaglandin F1alpha + NADP(+) = 15-oxoprostaglandin F1alpha + NADPH + H(+)</text>
        <dbReference type="Rhea" id="RHEA:50592"/>
        <dbReference type="ChEBI" id="CHEBI:15378"/>
        <dbReference type="ChEBI" id="CHEBI:57783"/>
        <dbReference type="ChEBI" id="CHEBI:58349"/>
        <dbReference type="ChEBI" id="CHEBI:79072"/>
        <dbReference type="ChEBI" id="CHEBI:133411"/>
    </reaction>
    <physiologicalReaction direction="right-to-left" evidence="4">
        <dbReference type="Rhea" id="RHEA:50594"/>
    </physiologicalReaction>
</comment>
<comment type="subunit">
    <text evidence="4">Monomer.</text>
</comment>
<comment type="subcellular location">
    <subcellularLocation>
        <location evidence="2">Cytoplasm</location>
    </subcellularLocation>
</comment>
<comment type="alternative products">
    <event type="alternative splicing"/>
    <isoform>
        <id>Q5BK81-1</id>
        <name evidence="9">1</name>
        <sequence type="displayed"/>
    </isoform>
    <isoform>
        <id>Q5BK81-2</id>
        <name evidence="7">2</name>
        <sequence type="described" ref="VSP_052852"/>
    </isoform>
</comment>
<comment type="similarity">
    <text evidence="5">Belongs to the NADP-dependent oxidoreductase L4BD family.</text>
</comment>
<accession>Q5BK81</accession>
<evidence type="ECO:0000250" key="1"/>
<evidence type="ECO:0000250" key="2">
    <source>
        <dbReference type="UniProtKB" id="Q29073"/>
    </source>
</evidence>
<evidence type="ECO:0000250" key="3">
    <source>
        <dbReference type="UniProtKB" id="Q8N8N7"/>
    </source>
</evidence>
<evidence type="ECO:0000250" key="4">
    <source>
        <dbReference type="UniProtKB" id="Q8VDQ1"/>
    </source>
</evidence>
<evidence type="ECO:0000255" key="5"/>
<evidence type="ECO:0000269" key="6">
    <source>
    </source>
</evidence>
<evidence type="ECO:0000269" key="7">
    <source>
    </source>
</evidence>
<evidence type="ECO:0000303" key="8">
    <source>
    </source>
</evidence>
<evidence type="ECO:0000305" key="9"/>
<evidence type="ECO:0000312" key="10">
    <source>
        <dbReference type="EMBL" id="AAH91173.1"/>
    </source>
</evidence>
<evidence type="ECO:0000312" key="11">
    <source>
        <dbReference type="RGD" id="1310518"/>
    </source>
</evidence>
<reference evidence="9" key="1">
    <citation type="journal article" date="2004" name="Nature">
        <title>Genome sequence of the Brown Norway rat yields insights into mammalian evolution.</title>
        <authorList>
            <person name="Gibbs R.A."/>
            <person name="Weinstock G.M."/>
            <person name="Metzker M.L."/>
            <person name="Muzny D.M."/>
            <person name="Sodergren E.J."/>
            <person name="Scherer S."/>
            <person name="Scott G."/>
            <person name="Steffen D."/>
            <person name="Worley K.C."/>
            <person name="Burch P.E."/>
            <person name="Okwuonu G."/>
            <person name="Hines S."/>
            <person name="Lewis L."/>
            <person name="Deramo C."/>
            <person name="Delgado O."/>
            <person name="Dugan-Rocha S."/>
            <person name="Miner G."/>
            <person name="Morgan M."/>
            <person name="Hawes A."/>
            <person name="Gill R."/>
            <person name="Holt R.A."/>
            <person name="Adams M.D."/>
            <person name="Amanatides P.G."/>
            <person name="Baden-Tillson H."/>
            <person name="Barnstead M."/>
            <person name="Chin S."/>
            <person name="Evans C.A."/>
            <person name="Ferriera S."/>
            <person name="Fosler C."/>
            <person name="Glodek A."/>
            <person name="Gu Z."/>
            <person name="Jennings D."/>
            <person name="Kraft C.L."/>
            <person name="Nguyen T."/>
            <person name="Pfannkoch C.M."/>
            <person name="Sitter C."/>
            <person name="Sutton G.G."/>
            <person name="Venter J.C."/>
            <person name="Woodage T."/>
            <person name="Smith D."/>
            <person name="Lee H.-M."/>
            <person name="Gustafson E."/>
            <person name="Cahill P."/>
            <person name="Kana A."/>
            <person name="Doucette-Stamm L."/>
            <person name="Weinstock K."/>
            <person name="Fechtel K."/>
            <person name="Weiss R.B."/>
            <person name="Dunn D.M."/>
            <person name="Green E.D."/>
            <person name="Blakesley R.W."/>
            <person name="Bouffard G.G."/>
            <person name="De Jong P.J."/>
            <person name="Osoegawa K."/>
            <person name="Zhu B."/>
            <person name="Marra M."/>
            <person name="Schein J."/>
            <person name="Bosdet I."/>
            <person name="Fjell C."/>
            <person name="Jones S."/>
            <person name="Krzywinski M."/>
            <person name="Mathewson C."/>
            <person name="Siddiqui A."/>
            <person name="Wye N."/>
            <person name="McPherson J."/>
            <person name="Zhao S."/>
            <person name="Fraser C.M."/>
            <person name="Shetty J."/>
            <person name="Shatsman S."/>
            <person name="Geer K."/>
            <person name="Chen Y."/>
            <person name="Abramzon S."/>
            <person name="Nierman W.C."/>
            <person name="Havlak P.H."/>
            <person name="Chen R."/>
            <person name="Durbin K.J."/>
            <person name="Egan A."/>
            <person name="Ren Y."/>
            <person name="Song X.-Z."/>
            <person name="Li B."/>
            <person name="Liu Y."/>
            <person name="Qin X."/>
            <person name="Cawley S."/>
            <person name="Cooney A.J."/>
            <person name="D'Souza L.M."/>
            <person name="Martin K."/>
            <person name="Wu J.Q."/>
            <person name="Gonzalez-Garay M.L."/>
            <person name="Jackson A.R."/>
            <person name="Kalafus K.J."/>
            <person name="McLeod M.P."/>
            <person name="Milosavljevic A."/>
            <person name="Virk D."/>
            <person name="Volkov A."/>
            <person name="Wheeler D.A."/>
            <person name="Zhang Z."/>
            <person name="Bailey J.A."/>
            <person name="Eichler E.E."/>
            <person name="Tuzun E."/>
            <person name="Birney E."/>
            <person name="Mongin E."/>
            <person name="Ureta-Vidal A."/>
            <person name="Woodwark C."/>
            <person name="Zdobnov E."/>
            <person name="Bork P."/>
            <person name="Suyama M."/>
            <person name="Torrents D."/>
            <person name="Alexandersson M."/>
            <person name="Trask B.J."/>
            <person name="Young J.M."/>
            <person name="Huang H."/>
            <person name="Wang H."/>
            <person name="Xing H."/>
            <person name="Daniels S."/>
            <person name="Gietzen D."/>
            <person name="Schmidt J."/>
            <person name="Stevens K."/>
            <person name="Vitt U."/>
            <person name="Wingrove J."/>
            <person name="Camara F."/>
            <person name="Mar Alba M."/>
            <person name="Abril J.F."/>
            <person name="Guigo R."/>
            <person name="Smit A."/>
            <person name="Dubchak I."/>
            <person name="Rubin E.M."/>
            <person name="Couronne O."/>
            <person name="Poliakov A."/>
            <person name="Huebner N."/>
            <person name="Ganten D."/>
            <person name="Goesele C."/>
            <person name="Hummel O."/>
            <person name="Kreitler T."/>
            <person name="Lee Y.-A."/>
            <person name="Monti J."/>
            <person name="Schulz H."/>
            <person name="Zimdahl H."/>
            <person name="Himmelbauer H."/>
            <person name="Lehrach H."/>
            <person name="Jacob H.J."/>
            <person name="Bromberg S."/>
            <person name="Gullings-Handley J."/>
            <person name="Jensen-Seaman M.I."/>
            <person name="Kwitek A.E."/>
            <person name="Lazar J."/>
            <person name="Pasko D."/>
            <person name="Tonellato P.J."/>
            <person name="Twigger S."/>
            <person name="Ponting C.P."/>
            <person name="Duarte J.M."/>
            <person name="Rice S."/>
            <person name="Goodstadt L."/>
            <person name="Beatson S.A."/>
            <person name="Emes R.D."/>
            <person name="Winter E.E."/>
            <person name="Webber C."/>
            <person name="Brandt P."/>
            <person name="Nyakatura G."/>
            <person name="Adetobi M."/>
            <person name="Chiaromonte F."/>
            <person name="Elnitski L."/>
            <person name="Eswara P."/>
            <person name="Hardison R.C."/>
            <person name="Hou M."/>
            <person name="Kolbe D."/>
            <person name="Makova K."/>
            <person name="Miller W."/>
            <person name="Nekrutenko A."/>
            <person name="Riemer C."/>
            <person name="Schwartz S."/>
            <person name="Taylor J."/>
            <person name="Yang S."/>
            <person name="Zhang Y."/>
            <person name="Lindpaintner K."/>
            <person name="Andrews T.D."/>
            <person name="Caccamo M."/>
            <person name="Clamp M."/>
            <person name="Clarke L."/>
            <person name="Curwen V."/>
            <person name="Durbin R.M."/>
            <person name="Eyras E."/>
            <person name="Searle S.M."/>
            <person name="Cooper G.M."/>
            <person name="Batzoglou S."/>
            <person name="Brudno M."/>
            <person name="Sidow A."/>
            <person name="Stone E.A."/>
            <person name="Payseur B.A."/>
            <person name="Bourque G."/>
            <person name="Lopez-Otin C."/>
            <person name="Puente X.S."/>
            <person name="Chakrabarti K."/>
            <person name="Chatterji S."/>
            <person name="Dewey C."/>
            <person name="Pachter L."/>
            <person name="Bray N."/>
            <person name="Yap V.B."/>
            <person name="Caspi A."/>
            <person name="Tesler G."/>
            <person name="Pevzner P.A."/>
            <person name="Haussler D."/>
            <person name="Roskin K.M."/>
            <person name="Baertsch R."/>
            <person name="Clawson H."/>
            <person name="Furey T.S."/>
            <person name="Hinrichs A.S."/>
            <person name="Karolchik D."/>
            <person name="Kent W.J."/>
            <person name="Rosenbloom K.R."/>
            <person name="Trumbower H."/>
            <person name="Weirauch M."/>
            <person name="Cooper D.N."/>
            <person name="Stenson P.D."/>
            <person name="Ma B."/>
            <person name="Brent M."/>
            <person name="Arumugam M."/>
            <person name="Shteynberg D."/>
            <person name="Copley R.R."/>
            <person name="Taylor M.S."/>
            <person name="Riethman H."/>
            <person name="Mudunuri U."/>
            <person name="Peterson J."/>
            <person name="Guyer M."/>
            <person name="Felsenfeld A."/>
            <person name="Old S."/>
            <person name="Mockrin S."/>
            <person name="Collins F.S."/>
        </authorList>
    </citation>
    <scope>NUCLEOTIDE SEQUENCE [LARGE SCALE GENOMIC DNA]</scope>
    <source>
        <strain evidence="6">Brown Norway</strain>
    </source>
</reference>
<reference evidence="9 10" key="2">
    <citation type="journal article" date="2004" name="Genome Res.">
        <title>The status, quality, and expansion of the NIH full-length cDNA project: the Mammalian Gene Collection (MGC).</title>
        <authorList>
            <consortium name="The MGC Project Team"/>
        </authorList>
    </citation>
    <scope>NUCLEOTIDE SEQUENCE [LARGE SCALE MRNA] (ISOFORM 2)</scope>
    <source>
        <strain evidence="10">Brown Norway</strain>
        <tissue evidence="10">Heart</tissue>
    </source>
</reference>
<sequence length="351" mass="38136">MIIQRVVLDSRPGKNGNPVAENFRVEEVSLPDTINEGQVRVRTLYLSVDPYMRCKMNEETGADYLAPWQLAQVADGGGLGVIEESKHQKLAKGDFVTSFYWPWQTKAILDGNGLEKVDPQLVDGHLSYFLGAIGMPGLTSLIGVQEKGHVSAGSNQTMVVSGAAGACGSLAGQIGHLLGCSRVVGICGTHEKCLFLTSELGFDAAVNYKTGNVAEQLREACPDGVDVYFDNVGGDISNAVISQMNQNSHIILCGQISQYNKDVPYPPPLPPAVEAIQKERNITRERFMVLNYKDRFEPGILQLSQWFKEGKLKIKETVANGLENMGVAFQSMMTGGNIGKQIVRISEDSSP</sequence>
<proteinExistence type="evidence at transcript level"/>
<feature type="chain" id="PRO_0000343830" description="Prostaglandin reductase 2">
    <location>
        <begin position="1"/>
        <end position="351"/>
    </location>
</feature>
<feature type="binding site" evidence="3">
    <location>
        <begin position="99"/>
        <end position="100"/>
    </location>
    <ligand>
        <name>substrate</name>
    </ligand>
</feature>
<feature type="binding site" evidence="3">
    <location>
        <begin position="165"/>
        <end position="168"/>
    </location>
    <ligand>
        <name>NADP(+)</name>
        <dbReference type="ChEBI" id="CHEBI:58349"/>
    </ligand>
</feature>
<feature type="binding site" evidence="3">
    <location>
        <position position="192"/>
    </location>
    <ligand>
        <name>NADP(+)</name>
        <dbReference type="ChEBI" id="CHEBI:58349"/>
    </ligand>
</feature>
<feature type="binding site" evidence="3">
    <location>
        <position position="208"/>
    </location>
    <ligand>
        <name>NADP(+)</name>
        <dbReference type="ChEBI" id="CHEBI:58349"/>
    </ligand>
</feature>
<feature type="binding site" evidence="3">
    <location>
        <position position="231"/>
    </location>
    <ligand>
        <name>NADP(+)</name>
        <dbReference type="ChEBI" id="CHEBI:58349"/>
    </ligand>
</feature>
<feature type="binding site" evidence="1">
    <location>
        <begin position="253"/>
        <end position="259"/>
    </location>
    <ligand>
        <name>NADP(+)</name>
        <dbReference type="ChEBI" id="CHEBI:58349"/>
    </ligand>
</feature>
<feature type="binding site" evidence="3">
    <location>
        <begin position="287"/>
        <end position="289"/>
    </location>
    <ligand>
        <name>NADP(+)</name>
        <dbReference type="ChEBI" id="CHEBI:58349"/>
    </ligand>
</feature>
<feature type="binding site" evidence="3">
    <location>
        <begin position="288"/>
        <end position="290"/>
    </location>
    <ligand>
        <name>substrate</name>
    </ligand>
</feature>
<feature type="binding site" evidence="3">
    <location>
        <position position="337"/>
    </location>
    <ligand>
        <name>NADP(+)</name>
        <dbReference type="ChEBI" id="CHEBI:58349"/>
    </ligand>
</feature>
<feature type="splice variant" id="VSP_052852" description="In isoform 2." evidence="8">
    <location>
        <begin position="244"/>
        <end position="313"/>
    </location>
</feature>